<keyword id="KW-1015">Disulfide bond</keyword>
<keyword id="KW-0325">Glycoprotein</keyword>
<keyword id="KW-0646">Protease inhibitor</keyword>
<keyword id="KW-0677">Repeat</keyword>
<keyword id="KW-0964">Secreted</keyword>
<keyword id="KW-0722">Serine protease inhibitor</keyword>
<keyword id="KW-0732">Signal</keyword>
<accession>B2BS84</accession>
<dbReference type="EMBL" id="EU012449">
    <property type="protein sequence ID" value="ABW90603.1"/>
    <property type="molecule type" value="mRNA"/>
</dbReference>
<dbReference type="SMR" id="B2BS84"/>
<dbReference type="GO" id="GO:0005576">
    <property type="term" value="C:extracellular region"/>
    <property type="evidence" value="ECO:0007669"/>
    <property type="project" value="UniProtKB-SubCell"/>
</dbReference>
<dbReference type="GO" id="GO:0004867">
    <property type="term" value="F:serine-type endopeptidase inhibitor activity"/>
    <property type="evidence" value="ECO:0007669"/>
    <property type="project" value="UniProtKB-KW"/>
</dbReference>
<dbReference type="CDD" id="cd22621">
    <property type="entry name" value="Kunitz_HAI2_1-like"/>
    <property type="match status" value="1"/>
</dbReference>
<dbReference type="CDD" id="cd22622">
    <property type="entry name" value="Kunitz_HAI2_2-like"/>
    <property type="match status" value="1"/>
</dbReference>
<dbReference type="Gene3D" id="4.10.410.10">
    <property type="entry name" value="Pancreatic trypsin inhibitor Kunitz domain"/>
    <property type="match status" value="2"/>
</dbReference>
<dbReference type="InterPro" id="IPR002223">
    <property type="entry name" value="Kunitz_BPTI"/>
</dbReference>
<dbReference type="InterPro" id="IPR036880">
    <property type="entry name" value="Kunitz_BPTI_sf"/>
</dbReference>
<dbReference type="InterPro" id="IPR020901">
    <property type="entry name" value="Prtase_inh_Kunz-CS"/>
</dbReference>
<dbReference type="PANTHER" id="PTHR47247">
    <property type="entry name" value="KUNITZ-TYPE PROTEASE INHIBITOR 2"/>
    <property type="match status" value="1"/>
</dbReference>
<dbReference type="PANTHER" id="PTHR47247:SF1">
    <property type="entry name" value="KUNITZ-TYPE PROTEASE INHIBITOR 2"/>
    <property type="match status" value="1"/>
</dbReference>
<dbReference type="Pfam" id="PF00014">
    <property type="entry name" value="Kunitz_BPTI"/>
    <property type="match status" value="2"/>
</dbReference>
<dbReference type="PRINTS" id="PR00759">
    <property type="entry name" value="BASICPTASE"/>
</dbReference>
<dbReference type="SMART" id="SM00131">
    <property type="entry name" value="KU"/>
    <property type="match status" value="2"/>
</dbReference>
<dbReference type="SUPFAM" id="SSF57362">
    <property type="entry name" value="BPTI-like"/>
    <property type="match status" value="2"/>
</dbReference>
<dbReference type="PROSITE" id="PS00280">
    <property type="entry name" value="BPTI_KUNITZ_1"/>
    <property type="match status" value="2"/>
</dbReference>
<dbReference type="PROSITE" id="PS50279">
    <property type="entry name" value="BPTI_KUNITZ_2"/>
    <property type="match status" value="2"/>
</dbReference>
<feature type="signal peptide" evidence="1">
    <location>
        <begin position="1"/>
        <end position="20"/>
    </location>
</feature>
<feature type="chain" id="PRO_0000376867" description="Putative Kunitz-type serine protease inhibitor">
    <location>
        <begin position="21"/>
        <end position="252"/>
    </location>
</feature>
<feature type="domain" description="BPTI/Kunitz inhibitor 1" evidence="3">
    <location>
        <begin position="27"/>
        <end position="77"/>
    </location>
</feature>
<feature type="domain" description="BPTI/Kunitz inhibitor 2" evidence="3">
    <location>
        <begin position="118"/>
        <end position="168"/>
    </location>
</feature>
<feature type="site" description="Reactive bond for trypsin" evidence="1">
    <location>
        <begin position="37"/>
        <end position="38"/>
    </location>
</feature>
<feature type="site" description="Reactive bond for trypsin" evidence="1">
    <location>
        <begin position="128"/>
        <end position="129"/>
    </location>
</feature>
<feature type="glycosylation site" description="N-linked (GlcNAc...) asparagine" evidence="2">
    <location>
        <position position="46"/>
    </location>
</feature>
<feature type="disulfide bond" evidence="3">
    <location>
        <begin position="27"/>
        <end position="77"/>
    </location>
</feature>
<feature type="disulfide bond" evidence="3">
    <location>
        <begin position="36"/>
        <end position="60"/>
    </location>
</feature>
<feature type="disulfide bond" evidence="3">
    <location>
        <begin position="52"/>
        <end position="73"/>
    </location>
</feature>
<feature type="disulfide bond" evidence="3">
    <location>
        <begin position="118"/>
        <end position="168"/>
    </location>
</feature>
<feature type="disulfide bond" evidence="3">
    <location>
        <begin position="127"/>
        <end position="151"/>
    </location>
</feature>
<feature type="disulfide bond" evidence="3">
    <location>
        <begin position="143"/>
        <end position="164"/>
    </location>
</feature>
<organism>
    <name type="scientific">Austrelaps labialis</name>
    <name type="common">Pygmy copperhead</name>
    <name type="synonym">Denisonia superba</name>
    <dbReference type="NCBI Taxonomy" id="471292"/>
    <lineage>
        <taxon>Eukaryota</taxon>
        <taxon>Metazoa</taxon>
        <taxon>Chordata</taxon>
        <taxon>Craniata</taxon>
        <taxon>Vertebrata</taxon>
        <taxon>Euteleostomi</taxon>
        <taxon>Lepidosauria</taxon>
        <taxon>Squamata</taxon>
        <taxon>Bifurcata</taxon>
        <taxon>Unidentata</taxon>
        <taxon>Episquamata</taxon>
        <taxon>Toxicofera</taxon>
        <taxon>Serpentes</taxon>
        <taxon>Colubroidea</taxon>
        <taxon>Elapidae</taxon>
        <taxon>Hydrophiinae</taxon>
        <taxon>Austrelaps</taxon>
    </lineage>
</organism>
<sequence>MTREKSLALLITLAAALAAAESPPGRCHSPKTVGPCRASFHRWRYNATSQMCQEFIFGGCKGNANNFVSKQDCFQTCIRGGAAEATVVPSGPATEVATPRAGHLPEAYENRPGFREFCAAPRVVGPCRASFLRWYFDLESRMCKMFIYGGCRGNKNNYLFEEHCWSQCTGDGEITEEPGDAGAQPPLPSEPFSFSTRAVVLAVLPAILVTILLGSMGVFFVKICRKNPELSVGTVWSTLDDKEYLMSNAYTL</sequence>
<name>VKT_AUSLA</name>
<proteinExistence type="evidence at transcript level"/>
<evidence type="ECO:0000250" key="1"/>
<evidence type="ECO:0000255" key="2"/>
<evidence type="ECO:0000255" key="3">
    <source>
        <dbReference type="PROSITE-ProRule" id="PRU00031"/>
    </source>
</evidence>
<evidence type="ECO:0000305" key="4"/>
<reference key="1">
    <citation type="journal article" date="2008" name="BMC Evol. Biol.">
        <title>Unusual accelerated rate of deletions and insertions in toxin genes in the venom glands of the pygmy copperhead (Austrelaps labialis) from Kangaroo island.</title>
        <authorList>
            <person name="Doley R."/>
            <person name="Tram N.N.B."/>
            <person name="Reza M.A."/>
            <person name="Kini R.M."/>
        </authorList>
    </citation>
    <scope>NUCLEOTIDE SEQUENCE [LARGE SCALE MRNA]</scope>
    <source>
        <tissue>Venom gland</tissue>
    </source>
</reference>
<comment type="function">
    <text evidence="1">Serine protease inhibitor.</text>
</comment>
<comment type="subcellular location">
    <subcellularLocation>
        <location evidence="1">Secreted</location>
    </subcellularLocation>
</comment>
<comment type="tissue specificity">
    <text>Expressed by the venom gland.</text>
</comment>
<comment type="similarity">
    <text evidence="4">Belongs to the venom Kunitz-type family.</text>
</comment>
<protein>
    <recommendedName>
        <fullName>Putative Kunitz-type serine protease inhibitor</fullName>
    </recommendedName>
</protein>